<sequence length="425" mass="47607">MADKEAAFDDAVEERVINEEYKIWKKNTPFLYDLVMTHALEWPSLTAQWLPDVTRPEGKDFSIHRLVLGTHTSDEQNHLVIASVQLPNDDAQFDASHYDSEKGEFGGFGSVSGKIEIEIKINHEGEVNRARYMPQNPCIIATKTPSSDVLVFDYTKHPSKPDPSGECNPDLRLRGHQKEGYGLSWNPNLSGHLLSASDDHTICLWDISAVPKEGKVVDAKTIFTGHTAVVEDVSWHLLHESLFGSVADDQKLMIWDTRSNNTSKPSHSVDAHTAEVNCLSFNPYSEFILATGSADKTVALWDLRNLKLKLHSFESHKDEIFQVQWSPHNETILASSGTDRRLNVWDLSKIGEEQSPEDAEDGPPELLFIHGGHTAKISDFSWNPNEPWVICSVSEDNIMQVWQMAENINNDEDPEGSVDPEGQGS</sequence>
<reference key="1">
    <citation type="journal article" date="1999" name="J. Biol. Chem.">
        <title>WD repeats of the p48 subunit of chicken chromatin assembly factor-1 required for in vitro interaction with chicken histone deacetylase-2.</title>
        <authorList>
            <person name="Ahmad A."/>
            <person name="Takami Y."/>
            <person name="Nakayama T."/>
        </authorList>
    </citation>
    <scope>NUCLEOTIDE SEQUENCE [MRNA]</scope>
    <scope>INTERACTION WITH HDAC1; HDAC2 AND HDAC3</scope>
</reference>
<reference key="2">
    <citation type="journal article" date="2000" name="Biochem. Biophys. Res. Commun.">
        <title>Distinct regions of the chicken p46 polypeptide are required for its in vitro interaction with histones H2B and H4 and histone acetyltransferase-1.</title>
        <authorList>
            <person name="Ahmad A."/>
            <person name="Takami Y."/>
            <person name="Nakayama T."/>
        </authorList>
    </citation>
    <scope>INTERACTION WITH HAT1 AND HISTONE H4</scope>
</reference>
<reference key="3">
    <citation type="journal article" date="2001" name="Nucleic Acids Res.">
        <title>Leucine zipper motif of chicken histone acetyltransferase-1 is essential for in vivo and in vitro interactions with the p48 subunit of chicken chromatin assembly factor-1.</title>
        <authorList>
            <person name="Ahmad A."/>
            <person name="Nagamatsu N."/>
            <person name="Kouriki H."/>
            <person name="Takami Y."/>
            <person name="Nakayama T."/>
        </authorList>
    </citation>
    <scope>INTERACTION WITH HAT1</scope>
</reference>
<reference key="4">
    <citation type="journal article" date="2004" name="Gene">
        <title>WD dipeptide motifs and LXXLL motif of chicken HIRA are essential for interactions with the p48 subunit of chromatin assembly factor-1 and histone deacetylase-2 in vitro and in vivo.</title>
        <authorList>
            <person name="Ahmad A."/>
            <person name="Takami Y."/>
            <person name="Nakayama T."/>
        </authorList>
    </citation>
    <scope>INTERACTION WITH HIRA</scope>
</reference>
<reference key="5">
    <citation type="journal article" date="2007" name="Mol. Biol. Cell">
        <title>Essential role of chromatin assembly factor-1-mediated rapid nucleosome assembly for DNA replication and cell division in vertebrate cells.</title>
        <authorList>
            <person name="Takami Y."/>
            <person name="Ono T."/>
            <person name="Fukagawa T."/>
            <person name="Shibahara K."/>
            <person name="Nakayama T."/>
        </authorList>
    </citation>
    <scope>INTERACTION WITH CHAF1A</scope>
</reference>
<gene>
    <name type="primary">RBBP4</name>
    <name type="synonym">RBAP48</name>
</gene>
<feature type="initiator methionine" description="Removed" evidence="1">
    <location>
        <position position="1"/>
    </location>
</feature>
<feature type="chain" id="PRO_0000051189" description="Histone-binding protein RBBP4">
    <location>
        <begin position="2"/>
        <end position="425"/>
    </location>
</feature>
<feature type="repeat" description="WD 1" evidence="2">
    <location>
        <begin position="32"/>
        <end position="125"/>
    </location>
</feature>
<feature type="repeat" description="WD 2" evidence="2">
    <location>
        <begin position="126"/>
        <end position="175"/>
    </location>
</feature>
<feature type="repeat" description="WD 3" evidence="2">
    <location>
        <begin position="176"/>
        <end position="223"/>
    </location>
</feature>
<feature type="repeat" description="WD 4" evidence="2">
    <location>
        <begin position="225"/>
        <end position="270"/>
    </location>
</feature>
<feature type="repeat" description="WD 5" evidence="2">
    <location>
        <begin position="271"/>
        <end position="314"/>
    </location>
</feature>
<feature type="repeat" description="WD 6" evidence="2">
    <location>
        <begin position="315"/>
        <end position="371"/>
    </location>
</feature>
<feature type="repeat" description="WD 7" evidence="2">
    <location>
        <begin position="372"/>
        <end position="404"/>
    </location>
</feature>
<feature type="region of interest" description="Interaction with HAT1">
    <location>
        <begin position="361"/>
        <end position="406"/>
    </location>
</feature>
<feature type="modified residue" description="N-acetylalanine" evidence="1">
    <location>
        <position position="2"/>
    </location>
</feature>
<evidence type="ECO:0000250" key="1"/>
<evidence type="ECO:0000250" key="2">
    <source>
        <dbReference type="UniProtKB" id="Q09028"/>
    </source>
</evidence>
<evidence type="ECO:0000269" key="3">
    <source>
    </source>
</evidence>
<evidence type="ECO:0000269" key="4">
    <source>
    </source>
</evidence>
<evidence type="ECO:0000269" key="5">
    <source>
    </source>
</evidence>
<evidence type="ECO:0000269" key="6">
    <source>
    </source>
</evidence>
<evidence type="ECO:0000269" key="7">
    <source>
    </source>
</evidence>
<evidence type="ECO:0000305" key="8"/>
<proteinExistence type="evidence at protein level"/>
<organism>
    <name type="scientific">Gallus gallus</name>
    <name type="common">Chicken</name>
    <dbReference type="NCBI Taxonomy" id="9031"/>
    <lineage>
        <taxon>Eukaryota</taxon>
        <taxon>Metazoa</taxon>
        <taxon>Chordata</taxon>
        <taxon>Craniata</taxon>
        <taxon>Vertebrata</taxon>
        <taxon>Euteleostomi</taxon>
        <taxon>Archelosauria</taxon>
        <taxon>Archosauria</taxon>
        <taxon>Dinosauria</taxon>
        <taxon>Saurischia</taxon>
        <taxon>Theropoda</taxon>
        <taxon>Coelurosauria</taxon>
        <taxon>Aves</taxon>
        <taxon>Neognathae</taxon>
        <taxon>Galloanserae</taxon>
        <taxon>Galliformes</taxon>
        <taxon>Phasianidae</taxon>
        <taxon>Phasianinae</taxon>
        <taxon>Gallus</taxon>
    </lineage>
</organism>
<accession>Q9W7I5</accession>
<comment type="function">
    <text evidence="2">Core histone-binding subunit that may target chromatin assembly factors, chromatin remodeling factors and histone deacetylases to their histone substrates in a manner that is regulated by nucleosomal DNA (By similarity). Component of several complexes which regulate chromatin metabolism (By similarity).</text>
</comment>
<comment type="subunit">
    <text evidence="2 3 4 5 6 7">Binds directly to histone H4, probably via helix 1 of the histone fold, a region that is not accessible when histone H4 is in chromatin (PubMed:11112423). Interacts with CHAF1A, HDAC1, HDAC2, HDAC3 and HIRA (PubMed:10347232, PubMed:15527972, PubMed:17065558). May also interact with HAT1 (PubMed:11112423, PubMed:11160883).</text>
</comment>
<comment type="subcellular location">
    <subcellularLocation>
        <location evidence="2">Nucleus</location>
    </subcellularLocation>
    <subcellularLocation>
        <location evidence="2">Chromosome</location>
        <location evidence="2">Telomere</location>
    </subcellularLocation>
</comment>
<comment type="similarity">
    <text evidence="8">Belongs to the WD repeat RBAP46/RBAP48/MSI1 family.</text>
</comment>
<protein>
    <recommendedName>
        <fullName>Histone-binding protein RBBP4</fullName>
    </recommendedName>
    <alternativeName>
        <fullName>Chromatin assembly factor 1 subunit C</fullName>
        <shortName>CAF-1 subunit C</shortName>
    </alternativeName>
    <alternativeName>
        <fullName>Chromatin assembly factor I p48 subunit</fullName>
        <shortName>CAF-I 48 kDa subunit</shortName>
        <shortName>CAF-I p48</shortName>
        <shortName>chCAF-1 p48</shortName>
    </alternativeName>
    <alternativeName>
        <fullName evidence="2">Retinoblastoma-binding protein 4</fullName>
        <shortName>RBBP-4</shortName>
    </alternativeName>
    <alternativeName>
        <fullName>Retinoblastoma-binding protein p48</fullName>
    </alternativeName>
</protein>
<keyword id="KW-0007">Acetylation</keyword>
<keyword id="KW-0131">Cell cycle</keyword>
<keyword id="KW-0143">Chaperone</keyword>
<keyword id="KW-0156">Chromatin regulator</keyword>
<keyword id="KW-0158">Chromosome</keyword>
<keyword id="KW-0227">DNA damage</keyword>
<keyword id="KW-0234">DNA repair</keyword>
<keyword id="KW-0235">DNA replication</keyword>
<keyword id="KW-0539">Nucleus</keyword>
<keyword id="KW-1185">Reference proteome</keyword>
<keyword id="KW-0677">Repeat</keyword>
<keyword id="KW-0678">Repressor</keyword>
<keyword id="KW-0779">Telomere</keyword>
<keyword id="KW-0804">Transcription</keyword>
<keyword id="KW-0805">Transcription regulation</keyword>
<keyword id="KW-0853">WD repeat</keyword>
<name>RBBP4_CHICK</name>
<dbReference type="EMBL" id="AF097750">
    <property type="protein sequence ID" value="AAD40568.1"/>
    <property type="molecule type" value="mRNA"/>
</dbReference>
<dbReference type="RefSeq" id="NP_990183.1">
    <property type="nucleotide sequence ID" value="NM_204852.1"/>
</dbReference>
<dbReference type="SMR" id="Q9W7I5"/>
<dbReference type="BioGRID" id="675936">
    <property type="interactions" value="1"/>
</dbReference>
<dbReference type="FunCoup" id="Q9W7I5">
    <property type="interactions" value="1041"/>
</dbReference>
<dbReference type="STRING" id="9031.ENSGALP00000005565"/>
<dbReference type="PaxDb" id="9031-ENSGALP00000005565"/>
<dbReference type="GeneID" id="395658"/>
<dbReference type="KEGG" id="gga:395658"/>
<dbReference type="CTD" id="5928"/>
<dbReference type="VEuPathDB" id="HostDB:geneid_395658"/>
<dbReference type="eggNOG" id="KOG0264">
    <property type="taxonomic scope" value="Eukaryota"/>
</dbReference>
<dbReference type="InParanoid" id="Q9W7I5"/>
<dbReference type="OrthoDB" id="427795at2759"/>
<dbReference type="PhylomeDB" id="Q9W7I5"/>
<dbReference type="PRO" id="PR:Q9W7I5"/>
<dbReference type="Proteomes" id="UP000000539">
    <property type="component" value="Unassembled WGS sequence"/>
</dbReference>
<dbReference type="GO" id="GO:0033186">
    <property type="term" value="C:CAF-1 complex"/>
    <property type="evidence" value="ECO:0000250"/>
    <property type="project" value="UniProtKB"/>
</dbReference>
<dbReference type="GO" id="GO:0000781">
    <property type="term" value="C:chromosome, telomeric region"/>
    <property type="evidence" value="ECO:0007669"/>
    <property type="project" value="UniProtKB-SubCell"/>
</dbReference>
<dbReference type="GO" id="GO:0035098">
    <property type="term" value="C:ESC/E(Z) complex"/>
    <property type="evidence" value="ECO:0000250"/>
    <property type="project" value="UniProtKB"/>
</dbReference>
<dbReference type="GO" id="GO:0005634">
    <property type="term" value="C:nucleus"/>
    <property type="evidence" value="ECO:0000250"/>
    <property type="project" value="HGNC-UCL"/>
</dbReference>
<dbReference type="GO" id="GO:0016581">
    <property type="term" value="C:NuRD complex"/>
    <property type="evidence" value="ECO:0000250"/>
    <property type="project" value="UniProtKB"/>
</dbReference>
<dbReference type="GO" id="GO:0042393">
    <property type="term" value="F:histone binding"/>
    <property type="evidence" value="ECO:0000318"/>
    <property type="project" value="GO_Central"/>
</dbReference>
<dbReference type="GO" id="GO:0006338">
    <property type="term" value="P:chromatin remodeling"/>
    <property type="evidence" value="ECO:0000250"/>
    <property type="project" value="HGNC-UCL"/>
</dbReference>
<dbReference type="GO" id="GO:0006281">
    <property type="term" value="P:DNA repair"/>
    <property type="evidence" value="ECO:0007669"/>
    <property type="project" value="UniProtKB-KW"/>
</dbReference>
<dbReference type="GO" id="GO:0006260">
    <property type="term" value="P:DNA replication"/>
    <property type="evidence" value="ECO:0007669"/>
    <property type="project" value="UniProtKB-KW"/>
</dbReference>
<dbReference type="GO" id="GO:0006335">
    <property type="term" value="P:DNA replication-dependent chromatin assembly"/>
    <property type="evidence" value="ECO:0000250"/>
    <property type="project" value="UniProtKB"/>
</dbReference>
<dbReference type="GO" id="GO:0006355">
    <property type="term" value="P:regulation of DNA-templated transcription"/>
    <property type="evidence" value="ECO:0000318"/>
    <property type="project" value="GO_Central"/>
</dbReference>
<dbReference type="FunFam" id="2.130.10.10:FF:000021">
    <property type="entry name" value="histone-binding protein RBBP4 isoform X1"/>
    <property type="match status" value="1"/>
</dbReference>
<dbReference type="Gene3D" id="2.130.10.10">
    <property type="entry name" value="YVTN repeat-like/Quinoprotein amine dehydrogenase"/>
    <property type="match status" value="1"/>
</dbReference>
<dbReference type="InterPro" id="IPR020472">
    <property type="entry name" value="G-protein_beta_WD-40_rep"/>
</dbReference>
<dbReference type="InterPro" id="IPR022052">
    <property type="entry name" value="Histone-bd_RBBP4-like_N"/>
</dbReference>
<dbReference type="InterPro" id="IPR015943">
    <property type="entry name" value="WD40/YVTN_repeat-like_dom_sf"/>
</dbReference>
<dbReference type="InterPro" id="IPR019775">
    <property type="entry name" value="WD40_repeat_CS"/>
</dbReference>
<dbReference type="InterPro" id="IPR036322">
    <property type="entry name" value="WD40_repeat_dom_sf"/>
</dbReference>
<dbReference type="InterPro" id="IPR001680">
    <property type="entry name" value="WD40_rpt"/>
</dbReference>
<dbReference type="InterPro" id="IPR050459">
    <property type="entry name" value="WD_repeat_RBAP46/RBAP48/MSI1"/>
</dbReference>
<dbReference type="PANTHER" id="PTHR22850">
    <property type="entry name" value="WD40 REPEAT FAMILY"/>
    <property type="match status" value="1"/>
</dbReference>
<dbReference type="Pfam" id="PF12265">
    <property type="entry name" value="CAF1C_H4-bd"/>
    <property type="match status" value="1"/>
</dbReference>
<dbReference type="Pfam" id="PF00400">
    <property type="entry name" value="WD40"/>
    <property type="match status" value="5"/>
</dbReference>
<dbReference type="PRINTS" id="PR00320">
    <property type="entry name" value="GPROTEINBRPT"/>
</dbReference>
<dbReference type="SMART" id="SM00320">
    <property type="entry name" value="WD40"/>
    <property type="match status" value="6"/>
</dbReference>
<dbReference type="SUPFAM" id="SSF50978">
    <property type="entry name" value="WD40 repeat-like"/>
    <property type="match status" value="1"/>
</dbReference>
<dbReference type="PROSITE" id="PS00678">
    <property type="entry name" value="WD_REPEATS_1"/>
    <property type="match status" value="3"/>
</dbReference>
<dbReference type="PROSITE" id="PS50082">
    <property type="entry name" value="WD_REPEATS_2"/>
    <property type="match status" value="5"/>
</dbReference>
<dbReference type="PROSITE" id="PS50294">
    <property type="entry name" value="WD_REPEATS_REGION"/>
    <property type="match status" value="1"/>
</dbReference>